<keyword id="KW-0687">Ribonucleoprotein</keyword>
<keyword id="KW-0689">Ribosomal protein</keyword>
<keyword id="KW-0694">RNA-binding</keyword>
<keyword id="KW-0699">rRNA-binding</keyword>
<dbReference type="EMBL" id="CP000685">
    <property type="protein sequence ID" value="ABQ04477.1"/>
    <property type="molecule type" value="Genomic_DNA"/>
</dbReference>
<dbReference type="RefSeq" id="WP_012023524.1">
    <property type="nucleotide sequence ID" value="NZ_MUGZ01000017.1"/>
</dbReference>
<dbReference type="SMR" id="A5FJZ2"/>
<dbReference type="STRING" id="376686.Fjoh_1445"/>
<dbReference type="KEGG" id="fjo:Fjoh_1445"/>
<dbReference type="eggNOG" id="COG0184">
    <property type="taxonomic scope" value="Bacteria"/>
</dbReference>
<dbReference type="HOGENOM" id="CLU_148518_0_1_10"/>
<dbReference type="OrthoDB" id="9799262at2"/>
<dbReference type="Proteomes" id="UP000006694">
    <property type="component" value="Chromosome"/>
</dbReference>
<dbReference type="GO" id="GO:0022627">
    <property type="term" value="C:cytosolic small ribosomal subunit"/>
    <property type="evidence" value="ECO:0007669"/>
    <property type="project" value="TreeGrafter"/>
</dbReference>
<dbReference type="GO" id="GO:0019843">
    <property type="term" value="F:rRNA binding"/>
    <property type="evidence" value="ECO:0007669"/>
    <property type="project" value="UniProtKB-UniRule"/>
</dbReference>
<dbReference type="GO" id="GO:0003735">
    <property type="term" value="F:structural constituent of ribosome"/>
    <property type="evidence" value="ECO:0007669"/>
    <property type="project" value="InterPro"/>
</dbReference>
<dbReference type="GO" id="GO:0006412">
    <property type="term" value="P:translation"/>
    <property type="evidence" value="ECO:0007669"/>
    <property type="project" value="UniProtKB-UniRule"/>
</dbReference>
<dbReference type="CDD" id="cd00353">
    <property type="entry name" value="Ribosomal_S15p_S13e"/>
    <property type="match status" value="1"/>
</dbReference>
<dbReference type="Gene3D" id="6.10.250.3130">
    <property type="match status" value="1"/>
</dbReference>
<dbReference type="Gene3D" id="1.10.287.10">
    <property type="entry name" value="S15/NS1, RNA-binding"/>
    <property type="match status" value="1"/>
</dbReference>
<dbReference type="HAMAP" id="MF_01343_B">
    <property type="entry name" value="Ribosomal_uS15_B"/>
    <property type="match status" value="1"/>
</dbReference>
<dbReference type="InterPro" id="IPR000589">
    <property type="entry name" value="Ribosomal_uS15"/>
</dbReference>
<dbReference type="InterPro" id="IPR005290">
    <property type="entry name" value="Ribosomal_uS15_bac-type"/>
</dbReference>
<dbReference type="InterPro" id="IPR009068">
    <property type="entry name" value="uS15_NS1_RNA-bd_sf"/>
</dbReference>
<dbReference type="NCBIfam" id="TIGR00952">
    <property type="entry name" value="S15_bact"/>
    <property type="match status" value="1"/>
</dbReference>
<dbReference type="PANTHER" id="PTHR23321">
    <property type="entry name" value="RIBOSOMAL PROTEIN S15, BACTERIAL AND ORGANELLAR"/>
    <property type="match status" value="1"/>
</dbReference>
<dbReference type="PANTHER" id="PTHR23321:SF26">
    <property type="entry name" value="SMALL RIBOSOMAL SUBUNIT PROTEIN US15M"/>
    <property type="match status" value="1"/>
</dbReference>
<dbReference type="Pfam" id="PF00312">
    <property type="entry name" value="Ribosomal_S15"/>
    <property type="match status" value="1"/>
</dbReference>
<dbReference type="SMART" id="SM01387">
    <property type="entry name" value="Ribosomal_S15"/>
    <property type="match status" value="1"/>
</dbReference>
<dbReference type="SUPFAM" id="SSF47060">
    <property type="entry name" value="S15/NS1 RNA-binding domain"/>
    <property type="match status" value="1"/>
</dbReference>
<dbReference type="PROSITE" id="PS00362">
    <property type="entry name" value="RIBOSOMAL_S15"/>
    <property type="match status" value="1"/>
</dbReference>
<accession>A5FJZ2</accession>
<feature type="chain" id="PRO_1000086801" description="Small ribosomal subunit protein uS15">
    <location>
        <begin position="1"/>
        <end position="88"/>
    </location>
</feature>
<gene>
    <name evidence="1" type="primary">rpsO</name>
    <name type="ordered locus">Fjoh_1445</name>
</gene>
<organism>
    <name type="scientific">Flavobacterium johnsoniae (strain ATCC 17061 / DSM 2064 / JCM 8514 / BCRC 14874 / CCUG 350202 / NBRC 14942 / NCIMB 11054 / UW101)</name>
    <name type="common">Cytophaga johnsonae</name>
    <dbReference type="NCBI Taxonomy" id="376686"/>
    <lineage>
        <taxon>Bacteria</taxon>
        <taxon>Pseudomonadati</taxon>
        <taxon>Bacteroidota</taxon>
        <taxon>Flavobacteriia</taxon>
        <taxon>Flavobacteriales</taxon>
        <taxon>Flavobacteriaceae</taxon>
        <taxon>Flavobacterium</taxon>
    </lineage>
</organism>
<sequence length="88" mass="10512">MYLTKEKKEEIFAQHGDAKNTGKAEGQIALFTYRISHLTEHLKKNRHDYNTERSLVLLVGKRRALLDYLKKKDINRYREIIKVLNIRK</sequence>
<reference key="1">
    <citation type="journal article" date="2009" name="Appl. Environ. Microbiol.">
        <title>Novel features of the polysaccharide-digesting gliding bacterium Flavobacterium johnsoniae as revealed by genome sequence analysis.</title>
        <authorList>
            <person name="McBride M.J."/>
            <person name="Xie G."/>
            <person name="Martens E.C."/>
            <person name="Lapidus A."/>
            <person name="Henrissat B."/>
            <person name="Rhodes R.G."/>
            <person name="Goltsman E."/>
            <person name="Wang W."/>
            <person name="Xu J."/>
            <person name="Hunnicutt D.W."/>
            <person name="Staroscik A.M."/>
            <person name="Hoover T.R."/>
            <person name="Cheng Y.Q."/>
            <person name="Stein J.L."/>
        </authorList>
    </citation>
    <scope>NUCLEOTIDE SEQUENCE [LARGE SCALE GENOMIC DNA]</scope>
    <source>
        <strain>ATCC 17061 / DSM 2064 / JCM 8514 / BCRC 14874 / CCUG 350202 / NBRC 14942 / NCIMB 11054 / UW101</strain>
    </source>
</reference>
<evidence type="ECO:0000255" key="1">
    <source>
        <dbReference type="HAMAP-Rule" id="MF_01343"/>
    </source>
</evidence>
<evidence type="ECO:0000305" key="2"/>
<comment type="function">
    <text evidence="1">One of the primary rRNA binding proteins, it binds directly to 16S rRNA where it helps nucleate assembly of the platform of the 30S subunit by binding and bridging several RNA helices of the 16S rRNA.</text>
</comment>
<comment type="function">
    <text evidence="1">Forms an intersubunit bridge (bridge B4) with the 23S rRNA of the 50S subunit in the ribosome.</text>
</comment>
<comment type="subunit">
    <text evidence="1">Part of the 30S ribosomal subunit. Forms a bridge to the 50S subunit in the 70S ribosome, contacting the 23S rRNA.</text>
</comment>
<comment type="similarity">
    <text evidence="1">Belongs to the universal ribosomal protein uS15 family.</text>
</comment>
<name>RS15_FLAJ1</name>
<protein>
    <recommendedName>
        <fullName evidence="1">Small ribosomal subunit protein uS15</fullName>
    </recommendedName>
    <alternativeName>
        <fullName evidence="2">30S ribosomal protein S15</fullName>
    </alternativeName>
</protein>
<proteinExistence type="inferred from homology"/>